<organism>
    <name type="scientific">Eremothecium gossypii (strain ATCC 10895 / CBS 109.51 / FGSC 9923 / NRRL Y-1056)</name>
    <name type="common">Yeast</name>
    <name type="synonym">Ashbya gossypii</name>
    <dbReference type="NCBI Taxonomy" id="284811"/>
    <lineage>
        <taxon>Eukaryota</taxon>
        <taxon>Fungi</taxon>
        <taxon>Dikarya</taxon>
        <taxon>Ascomycota</taxon>
        <taxon>Saccharomycotina</taxon>
        <taxon>Saccharomycetes</taxon>
        <taxon>Saccharomycetales</taxon>
        <taxon>Saccharomycetaceae</taxon>
        <taxon>Eremothecium</taxon>
    </lineage>
</organism>
<comment type="function">
    <text evidence="1">Acts as a component of the peripheral membrane COG complex that is involved in intra-Golgi protein trafficking. COG is located at the cis-Golgi, and regulates tethering of retrograde intra-Golgi vesicles and possibly a number of other membrane trafficking events (By similarity).</text>
</comment>
<comment type="subcellular location">
    <subcellularLocation>
        <location evidence="1">Golgi apparatus membrane</location>
        <topology evidence="1">Peripheral membrane protein</topology>
    </subcellularLocation>
</comment>
<comment type="similarity">
    <text evidence="2">Belongs to the COG6 family.</text>
</comment>
<evidence type="ECO:0000250" key="1"/>
<evidence type="ECO:0000305" key="2"/>
<accession>Q75AZ8</accession>
<proteinExistence type="inferred from homology"/>
<sequence>MDFLDYQAYGVPLTGTDDELLPEPASNLSLLAASGPSVSELNTSIQGDSTPPLLNTDSNFNFEGKDNLHERMEMYSELTVKLLPIQPGLVRDIFEDVTPQSSDFQHLLKKGNNVTSAVLVKRLSHVLNDMNHPNYQSDLQLKKALMILQDNQGVLGLDGSKLVRPDFLGSLSRKTLRSQLEKELLKDHLATLENFQPIARRIMRLRQPVKNIQEISEKVLDAQEAQNKSPLQDPLVSEVREKLEMLKLKKRVLVGIRESLTLNQLEDEQLRNGEIEDSYLDVLDKMMEIKERSTYLIAMNYEKAGKALLGNINQYLQLANKRIYNYLLGFLYDYESNTKTFGERNFEGDNVGLSLFQRCLVYLSNDLEYFNDFMKKVTSMRSKKLLDEFLIPFVIDNNEGRSIILSAHDPARYLGDVLAHVHSLLANEGDFLKSLFKYQEERMADMTQSIFQKNKDILQSLHVNMLNDIMSTLSNSVRIRLEQIVRFEEEATVTFDISQLLSLYKLMFTKQGMLDDNKLVKVFDDLAVLAKTKTMNYYTEFLSEAVKEEPEVTDLLPPKWLSKYLSDLTALFDKINGSSEQTGIVDKNFFTKLVKTPCESTFLKQAELCFPLAKKDRRVKFDLLVLEINGLDMIVSRLGPYRTNIFSDEYGSEVYDSLKRSLDTLLGQLEVHQTRNILESTGLELYYNLFNMIFPVASVQDPLDYDMYLSAQENQIMKLETIETNIAQKLSDYLPKALLDVQDTWLLYLASPKFADDIASRSFHVFANFYVVFKSVLLNIFPDDHQRINSIFIYSEEEVKMLLGIN</sequence>
<name>COG6_EREGS</name>
<keyword id="KW-0333">Golgi apparatus</keyword>
<keyword id="KW-0472">Membrane</keyword>
<keyword id="KW-0653">Protein transport</keyword>
<keyword id="KW-1185">Reference proteome</keyword>
<keyword id="KW-0813">Transport</keyword>
<gene>
    <name type="primary">COG6</name>
    <name type="ordered locus">ADL228C</name>
</gene>
<feature type="chain" id="PRO_0000339311" description="Conserved oligomeric Golgi complex subunit 6">
    <location>
        <begin position="1"/>
        <end position="806"/>
    </location>
</feature>
<protein>
    <recommendedName>
        <fullName>Conserved oligomeric Golgi complex subunit 6</fullName>
        <shortName>COG complex subunit 6</shortName>
    </recommendedName>
    <alternativeName>
        <fullName>Component of oligomeric Golgi complex 6</fullName>
    </alternativeName>
</protein>
<reference key="1">
    <citation type="journal article" date="2004" name="Science">
        <title>The Ashbya gossypii genome as a tool for mapping the ancient Saccharomyces cerevisiae genome.</title>
        <authorList>
            <person name="Dietrich F.S."/>
            <person name="Voegeli S."/>
            <person name="Brachat S."/>
            <person name="Lerch A."/>
            <person name="Gates K."/>
            <person name="Steiner S."/>
            <person name="Mohr C."/>
            <person name="Poehlmann R."/>
            <person name="Luedi P."/>
            <person name="Choi S."/>
            <person name="Wing R.A."/>
            <person name="Flavier A."/>
            <person name="Gaffney T.D."/>
            <person name="Philippsen P."/>
        </authorList>
    </citation>
    <scope>NUCLEOTIDE SEQUENCE [LARGE SCALE GENOMIC DNA]</scope>
    <source>
        <strain>ATCC 10895 / CBS 109.51 / FGSC 9923 / NRRL Y-1056</strain>
    </source>
</reference>
<reference key="2">
    <citation type="journal article" date="2013" name="G3 (Bethesda)">
        <title>Genomes of Ashbya fungi isolated from insects reveal four mating-type loci, numerous translocations, lack of transposons, and distinct gene duplications.</title>
        <authorList>
            <person name="Dietrich F.S."/>
            <person name="Voegeli S."/>
            <person name="Kuo S."/>
            <person name="Philippsen P."/>
        </authorList>
    </citation>
    <scope>GENOME REANNOTATION</scope>
    <scope>SEQUENCE REVISION TO 329; 336; 339 AND 355-377</scope>
    <source>
        <strain>ATCC 10895 / CBS 109.51 / FGSC 9923 / NRRL Y-1056</strain>
    </source>
</reference>
<dbReference type="EMBL" id="AE016817">
    <property type="protein sequence ID" value="AAS51692.2"/>
    <property type="molecule type" value="Genomic_DNA"/>
</dbReference>
<dbReference type="RefSeq" id="NP_983868.2">
    <property type="nucleotide sequence ID" value="NM_209221.2"/>
</dbReference>
<dbReference type="SMR" id="Q75AZ8"/>
<dbReference type="FunCoup" id="Q75AZ8">
    <property type="interactions" value="297"/>
</dbReference>
<dbReference type="STRING" id="284811.Q75AZ8"/>
<dbReference type="EnsemblFungi" id="AAS51692">
    <property type="protein sequence ID" value="AAS51692"/>
    <property type="gene ID" value="AGOS_ADL228C"/>
</dbReference>
<dbReference type="GeneID" id="4620003"/>
<dbReference type="KEGG" id="ago:AGOS_ADL228C"/>
<dbReference type="eggNOG" id="KOG3758">
    <property type="taxonomic scope" value="Eukaryota"/>
</dbReference>
<dbReference type="HOGENOM" id="CLU_017837_0_0_1"/>
<dbReference type="InParanoid" id="Q75AZ8"/>
<dbReference type="OMA" id="IINMICP"/>
<dbReference type="OrthoDB" id="272987at2759"/>
<dbReference type="Proteomes" id="UP000000591">
    <property type="component" value="Chromosome IV"/>
</dbReference>
<dbReference type="GO" id="GO:0000139">
    <property type="term" value="C:Golgi membrane"/>
    <property type="evidence" value="ECO:0007669"/>
    <property type="project" value="UniProtKB-SubCell"/>
</dbReference>
<dbReference type="GO" id="GO:0017119">
    <property type="term" value="C:Golgi transport complex"/>
    <property type="evidence" value="ECO:0000318"/>
    <property type="project" value="GO_Central"/>
</dbReference>
<dbReference type="GO" id="GO:0032258">
    <property type="term" value="P:cytoplasm to vacuole targeting by the Cvt pathway"/>
    <property type="evidence" value="ECO:0007669"/>
    <property type="project" value="EnsemblFungi"/>
</dbReference>
<dbReference type="GO" id="GO:0006891">
    <property type="term" value="P:intra-Golgi vesicle-mediated transport"/>
    <property type="evidence" value="ECO:0000318"/>
    <property type="project" value="GO_Central"/>
</dbReference>
<dbReference type="InterPro" id="IPR010490">
    <property type="entry name" value="COG6"/>
</dbReference>
<dbReference type="InterPro" id="IPR048369">
    <property type="entry name" value="COG6_C"/>
</dbReference>
<dbReference type="InterPro" id="IPR048368">
    <property type="entry name" value="COG6_N"/>
</dbReference>
<dbReference type="PANTHER" id="PTHR21506">
    <property type="entry name" value="COMPONENT OF OLIGOMERIC GOLGI COMPLEX 6"/>
    <property type="match status" value="1"/>
</dbReference>
<dbReference type="PANTHER" id="PTHR21506:SF0">
    <property type="entry name" value="CONSERVED OLIGOMERIC GOLGI COMPLEX SUBUNIT 6"/>
    <property type="match status" value="1"/>
</dbReference>
<dbReference type="Pfam" id="PF20653">
    <property type="entry name" value="COG6_C"/>
    <property type="match status" value="1"/>
</dbReference>
<dbReference type="Pfam" id="PF06419">
    <property type="entry name" value="COG6_N"/>
    <property type="match status" value="1"/>
</dbReference>
<dbReference type="SMART" id="SM01087">
    <property type="entry name" value="COG6"/>
    <property type="match status" value="1"/>
</dbReference>